<reference key="1">
    <citation type="journal article" date="2003" name="Proc. Natl. Acad. Sci. U.S.A.">
        <title>The genome of Nanoarchaeum equitans: insights into early archaeal evolution and derived parasitism.</title>
        <authorList>
            <person name="Waters E."/>
            <person name="Hohn M.J."/>
            <person name="Ahel I."/>
            <person name="Graham D.E."/>
            <person name="Adams M.D."/>
            <person name="Barnstead M."/>
            <person name="Beeson K.Y."/>
            <person name="Bibbs L."/>
            <person name="Bolanos R."/>
            <person name="Keller M."/>
            <person name="Kretz K."/>
            <person name="Lin X."/>
            <person name="Mathur E."/>
            <person name="Ni J."/>
            <person name="Podar M."/>
            <person name="Richardson T."/>
            <person name="Sutton G.G."/>
            <person name="Simon M."/>
            <person name="Soell D."/>
            <person name="Stetter K.O."/>
            <person name="Short J.M."/>
            <person name="Noorderwier M."/>
        </authorList>
    </citation>
    <scope>NUCLEOTIDE SEQUENCE [LARGE SCALE GENOMIC DNA]</scope>
    <source>
        <strain>Kin4-M</strain>
    </source>
</reference>
<feature type="chain" id="PRO_0000141558" description="Small ribosomal subunit protein eS17">
    <location>
        <begin position="1"/>
        <end position="72"/>
    </location>
</feature>
<accession>Q74MA1</accession>
<protein>
    <recommendedName>
        <fullName evidence="1">Small ribosomal subunit protein eS17</fullName>
    </recommendedName>
    <alternativeName>
        <fullName evidence="2">30S ribosomal protein S17e</fullName>
    </alternativeName>
</protein>
<evidence type="ECO:0000255" key="1">
    <source>
        <dbReference type="HAMAP-Rule" id="MF_00511"/>
    </source>
</evidence>
<evidence type="ECO:0000305" key="2"/>
<comment type="similarity">
    <text evidence="1">Belongs to the eukaryotic ribosomal protein eS17 family.</text>
</comment>
<sequence>MGRVKIKVVKRTALELFKRYPDIWTKDFEKNKKLVQALLKKVSKKFRNQIAGYLVRLVKFKEQNKLPIQYLR</sequence>
<dbReference type="EMBL" id="AE017199">
    <property type="protein sequence ID" value="AAR39169.1"/>
    <property type="molecule type" value="Genomic_DNA"/>
</dbReference>
<dbReference type="SMR" id="Q74MA1"/>
<dbReference type="STRING" id="228908.NEQ320"/>
<dbReference type="EnsemblBacteria" id="AAR39169">
    <property type="protein sequence ID" value="AAR39169"/>
    <property type="gene ID" value="NEQ320"/>
</dbReference>
<dbReference type="KEGG" id="neq:NEQ320"/>
<dbReference type="HOGENOM" id="CLU_176720_1_0_2"/>
<dbReference type="Proteomes" id="UP000000578">
    <property type="component" value="Chromosome"/>
</dbReference>
<dbReference type="GO" id="GO:0005829">
    <property type="term" value="C:cytosol"/>
    <property type="evidence" value="ECO:0007669"/>
    <property type="project" value="UniProtKB-ARBA"/>
</dbReference>
<dbReference type="GO" id="GO:1990904">
    <property type="term" value="C:ribonucleoprotein complex"/>
    <property type="evidence" value="ECO:0007669"/>
    <property type="project" value="UniProtKB-KW"/>
</dbReference>
<dbReference type="GO" id="GO:0005840">
    <property type="term" value="C:ribosome"/>
    <property type="evidence" value="ECO:0007669"/>
    <property type="project" value="UniProtKB-KW"/>
</dbReference>
<dbReference type="GO" id="GO:0003735">
    <property type="term" value="F:structural constituent of ribosome"/>
    <property type="evidence" value="ECO:0007669"/>
    <property type="project" value="InterPro"/>
</dbReference>
<dbReference type="GO" id="GO:0006412">
    <property type="term" value="P:translation"/>
    <property type="evidence" value="ECO:0007669"/>
    <property type="project" value="UniProtKB-UniRule"/>
</dbReference>
<dbReference type="Gene3D" id="1.10.60.20">
    <property type="entry name" value="Ribosomal protein S17e-like"/>
    <property type="match status" value="1"/>
</dbReference>
<dbReference type="HAMAP" id="MF_00511">
    <property type="entry name" value="Ribosomal_eS17"/>
    <property type="match status" value="1"/>
</dbReference>
<dbReference type="InterPro" id="IPR001210">
    <property type="entry name" value="Ribosomal_eS17"/>
</dbReference>
<dbReference type="InterPro" id="IPR018273">
    <property type="entry name" value="Ribosomal_eS17_CS"/>
</dbReference>
<dbReference type="InterPro" id="IPR036401">
    <property type="entry name" value="Ribosomal_eS17_sf"/>
</dbReference>
<dbReference type="NCBIfam" id="NF002242">
    <property type="entry name" value="PRK01151.1"/>
    <property type="match status" value="1"/>
</dbReference>
<dbReference type="PANTHER" id="PTHR10732">
    <property type="entry name" value="40S RIBOSOMAL PROTEIN S17"/>
    <property type="match status" value="1"/>
</dbReference>
<dbReference type="PANTHER" id="PTHR10732:SF0">
    <property type="entry name" value="40S RIBOSOMAL PROTEIN S17"/>
    <property type="match status" value="1"/>
</dbReference>
<dbReference type="Pfam" id="PF00833">
    <property type="entry name" value="Ribosomal_S17e"/>
    <property type="match status" value="1"/>
</dbReference>
<dbReference type="SUPFAM" id="SSF116820">
    <property type="entry name" value="Rps17e-like"/>
    <property type="match status" value="1"/>
</dbReference>
<dbReference type="PROSITE" id="PS00712">
    <property type="entry name" value="RIBOSOMAL_S17E"/>
    <property type="match status" value="1"/>
</dbReference>
<proteinExistence type="inferred from homology"/>
<organism>
    <name type="scientific">Nanoarchaeum equitans (strain Kin4-M)</name>
    <dbReference type="NCBI Taxonomy" id="228908"/>
    <lineage>
        <taxon>Archaea</taxon>
        <taxon>Nanobdellota</taxon>
        <taxon>Candidatus Nanoarchaeia</taxon>
        <taxon>Nanoarchaeales</taxon>
        <taxon>Nanoarchaeaceae</taxon>
        <taxon>Nanoarchaeum</taxon>
    </lineage>
</organism>
<name>RS17E_NANEQ</name>
<keyword id="KW-1185">Reference proteome</keyword>
<keyword id="KW-0687">Ribonucleoprotein</keyword>
<keyword id="KW-0689">Ribosomal protein</keyword>
<gene>
    <name evidence="1" type="primary">rps17e</name>
    <name type="ordered locus">NEQ320</name>
</gene>